<organism>
    <name type="scientific">Albidiferax ferrireducens (strain ATCC BAA-621 / DSM 15236 / T118)</name>
    <name type="common">Rhodoferax ferrireducens</name>
    <dbReference type="NCBI Taxonomy" id="338969"/>
    <lineage>
        <taxon>Bacteria</taxon>
        <taxon>Pseudomonadati</taxon>
        <taxon>Pseudomonadota</taxon>
        <taxon>Betaproteobacteria</taxon>
        <taxon>Burkholderiales</taxon>
        <taxon>Comamonadaceae</taxon>
        <taxon>Rhodoferax</taxon>
    </lineage>
</organism>
<dbReference type="EMBL" id="CP000267">
    <property type="protein sequence ID" value="ABD70668.1"/>
    <property type="molecule type" value="Genomic_DNA"/>
</dbReference>
<dbReference type="RefSeq" id="WP_011465234.1">
    <property type="nucleotide sequence ID" value="NC_007908.1"/>
</dbReference>
<dbReference type="SMR" id="Q21U85"/>
<dbReference type="STRING" id="338969.Rfer_2957"/>
<dbReference type="KEGG" id="rfr:Rfer_2957"/>
<dbReference type="eggNOG" id="COG1826">
    <property type="taxonomic scope" value="Bacteria"/>
</dbReference>
<dbReference type="HOGENOM" id="CLU_086034_1_1_4"/>
<dbReference type="OrthoDB" id="9816005at2"/>
<dbReference type="Proteomes" id="UP000008332">
    <property type="component" value="Chromosome"/>
</dbReference>
<dbReference type="GO" id="GO:0033281">
    <property type="term" value="C:TAT protein transport complex"/>
    <property type="evidence" value="ECO:0007669"/>
    <property type="project" value="UniProtKB-UniRule"/>
</dbReference>
<dbReference type="GO" id="GO:0008320">
    <property type="term" value="F:protein transmembrane transporter activity"/>
    <property type="evidence" value="ECO:0007669"/>
    <property type="project" value="UniProtKB-UniRule"/>
</dbReference>
<dbReference type="GO" id="GO:0043953">
    <property type="term" value="P:protein transport by the Tat complex"/>
    <property type="evidence" value="ECO:0007669"/>
    <property type="project" value="UniProtKB-UniRule"/>
</dbReference>
<dbReference type="Gene3D" id="1.20.5.3310">
    <property type="match status" value="1"/>
</dbReference>
<dbReference type="HAMAP" id="MF_00237">
    <property type="entry name" value="TatB"/>
    <property type="match status" value="1"/>
</dbReference>
<dbReference type="InterPro" id="IPR003369">
    <property type="entry name" value="TatA/B/E"/>
</dbReference>
<dbReference type="InterPro" id="IPR018448">
    <property type="entry name" value="TatB"/>
</dbReference>
<dbReference type="NCBIfam" id="TIGR01410">
    <property type="entry name" value="tatB"/>
    <property type="match status" value="1"/>
</dbReference>
<dbReference type="PANTHER" id="PTHR33162">
    <property type="entry name" value="SEC-INDEPENDENT PROTEIN TRANSLOCASE PROTEIN TATA, CHLOROPLASTIC"/>
    <property type="match status" value="1"/>
</dbReference>
<dbReference type="PANTHER" id="PTHR33162:SF1">
    <property type="entry name" value="SEC-INDEPENDENT PROTEIN TRANSLOCASE PROTEIN TATA, CHLOROPLASTIC"/>
    <property type="match status" value="1"/>
</dbReference>
<dbReference type="Pfam" id="PF02416">
    <property type="entry name" value="TatA_B_E"/>
    <property type="match status" value="1"/>
</dbReference>
<dbReference type="PRINTS" id="PR01506">
    <property type="entry name" value="TATBPROTEIN"/>
</dbReference>
<reference key="1">
    <citation type="submission" date="2006-02" db="EMBL/GenBank/DDBJ databases">
        <title>Complete sequence of chromosome of Rhodoferax ferrireducens DSM 15236.</title>
        <authorList>
            <person name="Copeland A."/>
            <person name="Lucas S."/>
            <person name="Lapidus A."/>
            <person name="Barry K."/>
            <person name="Detter J.C."/>
            <person name="Glavina del Rio T."/>
            <person name="Hammon N."/>
            <person name="Israni S."/>
            <person name="Pitluck S."/>
            <person name="Brettin T."/>
            <person name="Bruce D."/>
            <person name="Han C."/>
            <person name="Tapia R."/>
            <person name="Gilna P."/>
            <person name="Kiss H."/>
            <person name="Schmutz J."/>
            <person name="Larimer F."/>
            <person name="Land M."/>
            <person name="Kyrpides N."/>
            <person name="Ivanova N."/>
            <person name="Richardson P."/>
        </authorList>
    </citation>
    <scope>NUCLEOTIDE SEQUENCE [LARGE SCALE GENOMIC DNA]</scope>
    <source>
        <strain>ATCC BAA-621 / DSM 15236 / T118</strain>
    </source>
</reference>
<evidence type="ECO:0000255" key="1">
    <source>
        <dbReference type="HAMAP-Rule" id="MF_00237"/>
    </source>
</evidence>
<keyword id="KW-0997">Cell inner membrane</keyword>
<keyword id="KW-1003">Cell membrane</keyword>
<keyword id="KW-0472">Membrane</keyword>
<keyword id="KW-0653">Protein transport</keyword>
<keyword id="KW-1185">Reference proteome</keyword>
<keyword id="KW-0811">Translocation</keyword>
<keyword id="KW-0812">Transmembrane</keyword>
<keyword id="KW-1133">Transmembrane helix</keyword>
<keyword id="KW-0813">Transport</keyword>
<gene>
    <name evidence="1" type="primary">tatB</name>
    <name type="ordered locus">Rfer_2957</name>
</gene>
<sequence>MIDIGITKLAIIGGIALIVIGPEKLPGLAKTIGTLLGRARRYVADVKDEVNRSMDLDELKKMKDTVESAVRDVDNTIQTSAADFEKNWADATAQAADTPFNDFSPTPPAYRHPNKKWRVKQGATPNWYKARAGIRTRALSGAARVARFRPHKVN</sequence>
<feature type="chain" id="PRO_0000301223" description="Sec-independent protein translocase protein TatB">
    <location>
        <begin position="1"/>
        <end position="154"/>
    </location>
</feature>
<feature type="transmembrane region" description="Helical" evidence="1">
    <location>
        <begin position="1"/>
        <end position="21"/>
    </location>
</feature>
<proteinExistence type="inferred from homology"/>
<comment type="function">
    <text evidence="1">Part of the twin-arginine translocation (Tat) system that transports large folded proteins containing a characteristic twin-arginine motif in their signal peptide across membranes. Together with TatC, TatB is part of a receptor directly interacting with Tat signal peptides. TatB may form an oligomeric binding site that transiently accommodates folded Tat precursor proteins before their translocation.</text>
</comment>
<comment type="subunit">
    <text evidence="1">The Tat system comprises two distinct complexes: a TatABC complex, containing multiple copies of TatA, TatB and TatC subunits, and a separate TatA complex, containing only TatA subunits. Substrates initially bind to the TatABC complex, which probably triggers association of the separate TatA complex to form the active translocon.</text>
</comment>
<comment type="subcellular location">
    <subcellularLocation>
        <location evidence="1">Cell inner membrane</location>
        <topology evidence="1">Single-pass membrane protein</topology>
    </subcellularLocation>
</comment>
<comment type="similarity">
    <text evidence="1">Belongs to the TatB family.</text>
</comment>
<name>TATB_ALBFT</name>
<protein>
    <recommendedName>
        <fullName evidence="1">Sec-independent protein translocase protein TatB</fullName>
    </recommendedName>
</protein>
<accession>Q21U85</accession>